<proteinExistence type="inferred from homology"/>
<evidence type="ECO:0000255" key="1">
    <source>
        <dbReference type="HAMAP-Rule" id="MF_01637"/>
    </source>
</evidence>
<sequence length="196" mass="22006">MIYITPIAQKHFTKLLAGKKPGTQIRVFVVNPGTVHAKCNVCFCPPEEFKTSDVVIEFDLFSVHVDSVYVSFLKDAKIDVMINELDSQLTIKAPNATKECNNTRNNMNNDLLEDRVRNVLQFQINPQLELHGGSVSLIRITEDLLAVIKFYGGCNGCAMASYTIKEGIETTLKNLFPELKGVLDMTQHQHGTHSFY</sequence>
<organism>
    <name type="scientific">Blochmanniella pennsylvanica (strain BPEN)</name>
    <dbReference type="NCBI Taxonomy" id="291272"/>
    <lineage>
        <taxon>Bacteria</taxon>
        <taxon>Pseudomonadati</taxon>
        <taxon>Pseudomonadota</taxon>
        <taxon>Gammaproteobacteria</taxon>
        <taxon>Enterobacterales</taxon>
        <taxon>Enterobacteriaceae</taxon>
        <taxon>ant endosymbionts</taxon>
        <taxon>Candidatus Blochmanniella</taxon>
    </lineage>
</organism>
<dbReference type="EMBL" id="CP000016">
    <property type="protein sequence ID" value="AAZ41199.1"/>
    <property type="molecule type" value="Genomic_DNA"/>
</dbReference>
<dbReference type="RefSeq" id="WP_011283110.1">
    <property type="nucleotide sequence ID" value="NC_007292.1"/>
</dbReference>
<dbReference type="SMR" id="Q492A3"/>
<dbReference type="STRING" id="291272.BPEN_593"/>
<dbReference type="KEGG" id="bpn:BPEN_593"/>
<dbReference type="eggNOG" id="COG0316">
    <property type="taxonomic scope" value="Bacteria"/>
</dbReference>
<dbReference type="eggNOG" id="COG0694">
    <property type="taxonomic scope" value="Bacteria"/>
</dbReference>
<dbReference type="HOGENOM" id="CLU_094569_0_0_6"/>
<dbReference type="OrthoDB" id="9785450at2"/>
<dbReference type="Proteomes" id="UP000007794">
    <property type="component" value="Chromosome"/>
</dbReference>
<dbReference type="GO" id="GO:0051539">
    <property type="term" value="F:4 iron, 4 sulfur cluster binding"/>
    <property type="evidence" value="ECO:0007669"/>
    <property type="project" value="UniProtKB-UniRule"/>
</dbReference>
<dbReference type="GO" id="GO:0005506">
    <property type="term" value="F:iron ion binding"/>
    <property type="evidence" value="ECO:0007669"/>
    <property type="project" value="InterPro"/>
</dbReference>
<dbReference type="GO" id="GO:0016226">
    <property type="term" value="P:iron-sulfur cluster assembly"/>
    <property type="evidence" value="ECO:0007669"/>
    <property type="project" value="UniProtKB-UniRule"/>
</dbReference>
<dbReference type="GO" id="GO:0051604">
    <property type="term" value="P:protein maturation"/>
    <property type="evidence" value="ECO:0007669"/>
    <property type="project" value="UniProtKB-UniRule"/>
</dbReference>
<dbReference type="Gene3D" id="3.30.300.130">
    <property type="entry name" value="Fe-S cluster assembly (FSCA)"/>
    <property type="match status" value="1"/>
</dbReference>
<dbReference type="Gene3D" id="2.60.300.12">
    <property type="entry name" value="HesB-like domain"/>
    <property type="match status" value="1"/>
</dbReference>
<dbReference type="HAMAP" id="MF_01637">
    <property type="entry name" value="Fe_S_biogen_NfuA"/>
    <property type="match status" value="1"/>
</dbReference>
<dbReference type="InterPro" id="IPR017726">
    <property type="entry name" value="Fe/S_biogenesis_protein_NfuA"/>
</dbReference>
<dbReference type="InterPro" id="IPR000361">
    <property type="entry name" value="FeS_biogenesis"/>
</dbReference>
<dbReference type="InterPro" id="IPR034904">
    <property type="entry name" value="FSCA_dom_sf"/>
</dbReference>
<dbReference type="InterPro" id="IPR035903">
    <property type="entry name" value="HesB-like_dom_sf"/>
</dbReference>
<dbReference type="InterPro" id="IPR001075">
    <property type="entry name" value="NIF_FeS_clus_asmbl_NifU_C"/>
</dbReference>
<dbReference type="PANTHER" id="PTHR11178:SF51">
    <property type="entry name" value="FE_S BIOGENESIS PROTEIN NFUA"/>
    <property type="match status" value="1"/>
</dbReference>
<dbReference type="PANTHER" id="PTHR11178">
    <property type="entry name" value="IRON-SULFUR CLUSTER SCAFFOLD PROTEIN NFU-RELATED"/>
    <property type="match status" value="1"/>
</dbReference>
<dbReference type="Pfam" id="PF01521">
    <property type="entry name" value="Fe-S_biosyn"/>
    <property type="match status" value="1"/>
</dbReference>
<dbReference type="Pfam" id="PF01106">
    <property type="entry name" value="NifU"/>
    <property type="match status" value="1"/>
</dbReference>
<dbReference type="SUPFAM" id="SSF117916">
    <property type="entry name" value="Fe-S cluster assembly (FSCA) domain-like"/>
    <property type="match status" value="1"/>
</dbReference>
<dbReference type="SUPFAM" id="SSF89360">
    <property type="entry name" value="HesB-like domain"/>
    <property type="match status" value="1"/>
</dbReference>
<accession>Q492A3</accession>
<protein>
    <recommendedName>
        <fullName evidence="1">Fe/S biogenesis protein NfuA</fullName>
    </recommendedName>
</protein>
<gene>
    <name evidence="1" type="primary">nfuA</name>
    <name type="ordered locus">BPEN_593</name>
</gene>
<name>NFUA_BLOPB</name>
<keyword id="KW-0004">4Fe-4S</keyword>
<keyword id="KW-0408">Iron</keyword>
<keyword id="KW-0411">Iron-sulfur</keyword>
<keyword id="KW-0479">Metal-binding</keyword>
<keyword id="KW-1185">Reference proteome</keyword>
<reference key="1">
    <citation type="journal article" date="2005" name="Genome Res.">
        <title>Genome sequence of Blochmannia pennsylvanicus indicates parallel evolutionary trends among bacterial mutualists of insects.</title>
        <authorList>
            <person name="Degnan P.H."/>
            <person name="Lazarus A.B."/>
            <person name="Wernegreen J.J."/>
        </authorList>
    </citation>
    <scope>NUCLEOTIDE SEQUENCE [LARGE SCALE GENOMIC DNA]</scope>
    <source>
        <strain>BPEN</strain>
    </source>
</reference>
<feature type="chain" id="PRO_1000186738" description="Fe/S biogenesis protein NfuA">
    <location>
        <begin position="1"/>
        <end position="196"/>
    </location>
</feature>
<feature type="binding site" evidence="1">
    <location>
        <position position="154"/>
    </location>
    <ligand>
        <name>[4Fe-4S] cluster</name>
        <dbReference type="ChEBI" id="CHEBI:49883"/>
    </ligand>
</feature>
<feature type="binding site" evidence="1">
    <location>
        <position position="157"/>
    </location>
    <ligand>
        <name>[4Fe-4S] cluster</name>
        <dbReference type="ChEBI" id="CHEBI:49883"/>
    </ligand>
</feature>
<comment type="function">
    <text evidence="1">Involved in iron-sulfur cluster biogenesis. Binds a 4Fe-4S cluster, can transfer this cluster to apoproteins, and thereby intervenes in the maturation of Fe/S proteins. Could also act as a scaffold/chaperone for damaged Fe/S proteins.</text>
</comment>
<comment type="cofactor">
    <cofactor evidence="1">
        <name>[4Fe-4S] cluster</name>
        <dbReference type="ChEBI" id="CHEBI:49883"/>
    </cofactor>
    <text evidence="1">Binds 1 [4Fe-4S] cluster per subunit. The cluster is presumably bound at the interface of two monomers.</text>
</comment>
<comment type="subunit">
    <text evidence="1">Homodimer.</text>
</comment>
<comment type="similarity">
    <text evidence="1">Belongs to the NfuA family.</text>
</comment>